<comment type="function">
    <text evidence="4">Catalyzes the activation of long-chain fatty acids as acyl-adenylates (acyl-AMP), which are then transferred to a multifunctional polyketide synthase (PKS) for further chain extension.</text>
</comment>
<comment type="catalytic activity">
    <reaction evidence="1">
        <text>dodecanoate + ATP + H(+) = dodecanoyl-AMP + diphosphate</text>
        <dbReference type="Rhea" id="RHEA:43712"/>
        <dbReference type="ChEBI" id="CHEBI:15378"/>
        <dbReference type="ChEBI" id="CHEBI:18262"/>
        <dbReference type="ChEBI" id="CHEBI:30616"/>
        <dbReference type="ChEBI" id="CHEBI:33019"/>
        <dbReference type="ChEBI" id="CHEBI:83623"/>
    </reaction>
    <physiologicalReaction direction="left-to-right" evidence="1">
        <dbReference type="Rhea" id="RHEA:43713"/>
    </physiologicalReaction>
</comment>
<comment type="pathway">
    <text evidence="3">Lipid metabolism; fatty acid biosynthesis.</text>
</comment>
<comment type="similarity">
    <text evidence="3">Belongs to the ATP-dependent AMP-binding enzyme family.</text>
</comment>
<keyword id="KW-0067">ATP-binding</keyword>
<keyword id="KW-0276">Fatty acid metabolism</keyword>
<keyword id="KW-0436">Ligase</keyword>
<keyword id="KW-0443">Lipid metabolism</keyword>
<keyword id="KW-0547">Nucleotide-binding</keyword>
<keyword id="KW-1185">Reference proteome</keyword>
<organism>
    <name type="scientific">Mycobacterium tuberculosis (strain ATCC 25618 / H37Rv)</name>
    <dbReference type="NCBI Taxonomy" id="83332"/>
    <lineage>
        <taxon>Bacteria</taxon>
        <taxon>Bacillati</taxon>
        <taxon>Actinomycetota</taxon>
        <taxon>Actinomycetes</taxon>
        <taxon>Mycobacteriales</taxon>
        <taxon>Mycobacteriaceae</taxon>
        <taxon>Mycobacterium</taxon>
        <taxon>Mycobacterium tuberculosis complex</taxon>
    </lineage>
</organism>
<dbReference type="EC" id="6.2.1.-" evidence="1"/>
<dbReference type="EMBL" id="AL123456">
    <property type="protein sequence ID" value="CCP43135.1"/>
    <property type="molecule type" value="Genomic_DNA"/>
</dbReference>
<dbReference type="PIR" id="C70634">
    <property type="entry name" value="C70634"/>
</dbReference>
<dbReference type="RefSeq" id="NP_214918.1">
    <property type="nucleotide sequence ID" value="NC_000962.3"/>
</dbReference>
<dbReference type="RefSeq" id="WP_003900139.1">
    <property type="nucleotide sequence ID" value="NZ_NVQJ01000002.1"/>
</dbReference>
<dbReference type="SMR" id="P9WQ57"/>
<dbReference type="FunCoup" id="P9WQ57">
    <property type="interactions" value="9"/>
</dbReference>
<dbReference type="STRING" id="83332.Rv0404"/>
<dbReference type="SwissLipids" id="SLP:000000987"/>
<dbReference type="PaxDb" id="83332-Rv0404"/>
<dbReference type="DNASU" id="886409"/>
<dbReference type="GeneID" id="886409"/>
<dbReference type="KEGG" id="mtu:Rv0404"/>
<dbReference type="KEGG" id="mtv:RVBD_0404"/>
<dbReference type="TubercuList" id="Rv0404"/>
<dbReference type="eggNOG" id="COG0318">
    <property type="taxonomic scope" value="Bacteria"/>
</dbReference>
<dbReference type="InParanoid" id="P9WQ57"/>
<dbReference type="OrthoDB" id="4667488at2"/>
<dbReference type="PhylomeDB" id="P9WQ57"/>
<dbReference type="UniPathway" id="UPA00094"/>
<dbReference type="Proteomes" id="UP000001584">
    <property type="component" value="Chromosome"/>
</dbReference>
<dbReference type="GO" id="GO:0070566">
    <property type="term" value="F:adenylyltransferase activity"/>
    <property type="evidence" value="ECO:0000314"/>
    <property type="project" value="MTBBASE"/>
</dbReference>
<dbReference type="GO" id="GO:0005524">
    <property type="term" value="F:ATP binding"/>
    <property type="evidence" value="ECO:0007669"/>
    <property type="project" value="UniProtKB-KW"/>
</dbReference>
<dbReference type="GO" id="GO:0016874">
    <property type="term" value="F:ligase activity"/>
    <property type="evidence" value="ECO:0000315"/>
    <property type="project" value="UniProtKB"/>
</dbReference>
<dbReference type="GO" id="GO:0071766">
    <property type="term" value="P:Actinobacterium-type cell wall biogenesis"/>
    <property type="evidence" value="ECO:0000315"/>
    <property type="project" value="UniProtKB"/>
</dbReference>
<dbReference type="GO" id="GO:0006633">
    <property type="term" value="P:fatty acid biosynthetic process"/>
    <property type="evidence" value="ECO:0000318"/>
    <property type="project" value="GO_Central"/>
</dbReference>
<dbReference type="GO" id="GO:0008610">
    <property type="term" value="P:lipid biosynthetic process"/>
    <property type="evidence" value="ECO:0000315"/>
    <property type="project" value="UniProtKB"/>
</dbReference>
<dbReference type="GO" id="GO:0052167">
    <property type="term" value="P:symbiont-mediated perturbation of host innate immune response"/>
    <property type="evidence" value="ECO:0000314"/>
    <property type="project" value="MTBBASE"/>
</dbReference>
<dbReference type="CDD" id="cd05931">
    <property type="entry name" value="FAAL"/>
    <property type="match status" value="1"/>
</dbReference>
<dbReference type="FunFam" id="3.30.300.30:FF:000029">
    <property type="entry name" value="Fatty-acid-CoA ligase FadD31"/>
    <property type="match status" value="1"/>
</dbReference>
<dbReference type="FunFam" id="3.40.50.12780:FF:000013">
    <property type="entry name" value="Long-chain-fatty-acid--AMP ligase FadD32"/>
    <property type="match status" value="1"/>
</dbReference>
<dbReference type="Gene3D" id="3.30.300.30">
    <property type="match status" value="1"/>
</dbReference>
<dbReference type="Gene3D" id="3.40.50.12780">
    <property type="entry name" value="N-terminal domain of ligase-like"/>
    <property type="match status" value="1"/>
</dbReference>
<dbReference type="InterPro" id="IPR025110">
    <property type="entry name" value="AMP-bd_C"/>
</dbReference>
<dbReference type="InterPro" id="IPR045851">
    <property type="entry name" value="AMP-bd_C_sf"/>
</dbReference>
<dbReference type="InterPro" id="IPR000873">
    <property type="entry name" value="AMP-dep_synth/lig_dom"/>
</dbReference>
<dbReference type="InterPro" id="IPR042099">
    <property type="entry name" value="ANL_N_sf"/>
</dbReference>
<dbReference type="InterPro" id="IPR040097">
    <property type="entry name" value="FAAL/FAAC"/>
</dbReference>
<dbReference type="PANTHER" id="PTHR22754:SF32">
    <property type="entry name" value="DISCO-INTERACTING PROTEIN 2"/>
    <property type="match status" value="1"/>
</dbReference>
<dbReference type="PANTHER" id="PTHR22754">
    <property type="entry name" value="DISCO-INTERACTING PROTEIN 2 DIP2 -RELATED"/>
    <property type="match status" value="1"/>
</dbReference>
<dbReference type="Pfam" id="PF00501">
    <property type="entry name" value="AMP-binding"/>
    <property type="match status" value="1"/>
</dbReference>
<dbReference type="Pfam" id="PF23024">
    <property type="entry name" value="AMP-dom_DIP2-like"/>
    <property type="match status" value="1"/>
</dbReference>
<dbReference type="SUPFAM" id="SSF56801">
    <property type="entry name" value="Acetyl-CoA synthetase-like"/>
    <property type="match status" value="1"/>
</dbReference>
<name>FAA30_MYCTU</name>
<accession>P9WQ57</accession>
<accession>L0T3F7</accession>
<accession>P95213</accession>
<accession>Q7D9V7</accession>
<protein>
    <recommendedName>
        <fullName evidence="3">Probable long-chain-fatty-acid--AMP ligase FadD30</fullName>
        <shortName>FAAL</shortName>
        <ecNumber evidence="1">6.2.1.-</ecNumber>
    </recommendedName>
    <alternativeName>
        <fullName>Acyl-AMP synthetase</fullName>
    </alternativeName>
    <alternativeName>
        <fullName evidence="2">FAAL30</fullName>
    </alternativeName>
</protein>
<proteinExistence type="evidence at protein level"/>
<gene>
    <name type="primary">fadD30</name>
    <name type="ordered locus">Rv0404</name>
</gene>
<reference key="1">
    <citation type="journal article" date="1998" name="Nature">
        <title>Deciphering the biology of Mycobacterium tuberculosis from the complete genome sequence.</title>
        <authorList>
            <person name="Cole S.T."/>
            <person name="Brosch R."/>
            <person name="Parkhill J."/>
            <person name="Garnier T."/>
            <person name="Churcher C.M."/>
            <person name="Harris D.E."/>
            <person name="Gordon S.V."/>
            <person name="Eiglmeier K."/>
            <person name="Gas S."/>
            <person name="Barry C.E. III"/>
            <person name="Tekaia F."/>
            <person name="Badcock K."/>
            <person name="Basham D."/>
            <person name="Brown D."/>
            <person name="Chillingworth T."/>
            <person name="Connor R."/>
            <person name="Davies R.M."/>
            <person name="Devlin K."/>
            <person name="Feltwell T."/>
            <person name="Gentles S."/>
            <person name="Hamlin N."/>
            <person name="Holroyd S."/>
            <person name="Hornsby T."/>
            <person name="Jagels K."/>
            <person name="Krogh A."/>
            <person name="McLean J."/>
            <person name="Moule S."/>
            <person name="Murphy L.D."/>
            <person name="Oliver S."/>
            <person name="Osborne J."/>
            <person name="Quail M.A."/>
            <person name="Rajandream M.A."/>
            <person name="Rogers J."/>
            <person name="Rutter S."/>
            <person name="Seeger K."/>
            <person name="Skelton S."/>
            <person name="Squares S."/>
            <person name="Squares R."/>
            <person name="Sulston J.E."/>
            <person name="Taylor K."/>
            <person name="Whitehead S."/>
            <person name="Barrell B.G."/>
        </authorList>
    </citation>
    <scope>NUCLEOTIDE SEQUENCE [LARGE SCALE GENOMIC DNA]</scope>
    <source>
        <strain>ATCC 25618 / H37Rv</strain>
    </source>
</reference>
<reference key="2">
    <citation type="journal article" date="2004" name="Nature">
        <title>Enzymic activation and transfer of fatty acids as acyl-adenylates in mycobacteria.</title>
        <authorList>
            <person name="Trivedi O.A."/>
            <person name="Arora P."/>
            <person name="Sridharan V."/>
            <person name="Tickoo R."/>
            <person name="Mohanty D."/>
            <person name="Gokhale R.S."/>
        </authorList>
    </citation>
    <scope>FUNCTION AS AN ACYL-AMP SYNTHETASE</scope>
    <source>
        <strain>ATCC 25618 / H37Rv</strain>
    </source>
</reference>
<reference key="3">
    <citation type="journal article" date="2008" name="BMC Syst. Biol.">
        <title>targetTB: a target identification pipeline for Mycobacterium tuberculosis through an interactome, reactome and genome-scale structural analysis.</title>
        <authorList>
            <person name="Raman K."/>
            <person name="Yeturu K."/>
            <person name="Chandra N."/>
        </authorList>
    </citation>
    <scope>IDENTIFICATION AS A DRUG TARGET [LARGE SCALE ANALYSIS]</scope>
</reference>
<reference key="4">
    <citation type="journal article" date="2009" name="Nat. Chem. Biol.">
        <title>Mechanistic and functional insights into fatty acid activation in Mycobacterium tuberculosis.</title>
        <authorList>
            <person name="Arora P."/>
            <person name="Goyal A."/>
            <person name="Natarajan V.T."/>
            <person name="Rajakumara E."/>
            <person name="Verma P."/>
            <person name="Gupta R."/>
            <person name="Yousuf M."/>
            <person name="Trivedi O.A."/>
            <person name="Mohanty D."/>
            <person name="Tyagi A."/>
            <person name="Sankaranarayanan R."/>
            <person name="Gokhale R.S."/>
        </authorList>
    </citation>
    <scope>CATALYTIC ACTIVITY</scope>
</reference>
<reference key="5">
    <citation type="journal article" date="2011" name="Mol. Cell. Proteomics">
        <title>Proteogenomic analysis of Mycobacterium tuberculosis by high resolution mass spectrometry.</title>
        <authorList>
            <person name="Kelkar D.S."/>
            <person name="Kumar D."/>
            <person name="Kumar P."/>
            <person name="Balakrishnan L."/>
            <person name="Muthusamy B."/>
            <person name="Yadav A.K."/>
            <person name="Shrivastava P."/>
            <person name="Marimuthu A."/>
            <person name="Anand S."/>
            <person name="Sundaram H."/>
            <person name="Kingsbury R."/>
            <person name="Harsha H.C."/>
            <person name="Nair B."/>
            <person name="Prasad T.S."/>
            <person name="Chauhan D.S."/>
            <person name="Katoch K."/>
            <person name="Katoch V.M."/>
            <person name="Kumar P."/>
            <person name="Chaerkady R."/>
            <person name="Ramachandran S."/>
            <person name="Dash D."/>
            <person name="Pandey A."/>
        </authorList>
    </citation>
    <scope>IDENTIFICATION BY MASS SPECTROMETRY [LARGE SCALE ANALYSIS]</scope>
    <source>
        <strain>ATCC 25618 / H37Rv</strain>
    </source>
</reference>
<feature type="chain" id="PRO_0000406631" description="Probable long-chain-fatty-acid--AMP ligase FadD30">
    <location>
        <begin position="1"/>
        <end position="585"/>
    </location>
</feature>
<sequence>MSVISTLRDRATTTPSDEAFVFMDYDTKTGDQIDRMTWSQLYSRVTAVSAYLISYGRHADRRRTAAISAPQGLDYVAGFLGALCAGWTPVPLPEPLGSLRDKRTGLAVLDCAADVVLTTSQAETRVRATIATHGASVTTPVIALDTLDEPSGDNCDLDSQLSDWSSYLQYTSGSTANPRGVVLSMRNVTENVDQIIRNYFRHEGGAPRLPSSVVSWLPLYHDMGLMVGLFIPLFVGCPVILTSPEAFIRKPARWMQLLAKHQAPFSAAPNFAFDLAVAKTSEEDMAGLDLGHVNTIINGAEQVQPNTITKFLRRFRPYNLMPAAVKPSYGMAEAVVYLATTKAGSPPTSTEFDADSLARGHAELSTFETERATRLIRYHSDDKEPLLRIVDPDSNIELGPGRIGEIWIHGKNVSTGYHNADDALNRDKFQASIREASAGTPRSPWLRTGDLGFIVGDEFYIVGRMKDLIIQDGVNHYPDDIETTVKEFTGGRVAAFSVSDDGVEHLVIAAEVRTEHGPDKVTIMDFSTIKRLVVSALSKLHGLHVTDFLLVPPGALPKTTSGKISRAACAKQYGANKLQRVATFP</sequence>
<evidence type="ECO:0000269" key="1">
    <source>
    </source>
</evidence>
<evidence type="ECO:0000303" key="2">
    <source>
    </source>
</evidence>
<evidence type="ECO:0000305" key="3"/>
<evidence type="ECO:0000305" key="4">
    <source>
    </source>
</evidence>